<dbReference type="EMBL" id="BA000038">
    <property type="protein sequence ID" value="BAC96903.1"/>
    <property type="molecule type" value="Genomic_DNA"/>
</dbReference>
<dbReference type="RefSeq" id="WP_011152189.1">
    <property type="nucleotide sequence ID" value="NC_005140.1"/>
</dbReference>
<dbReference type="SMR" id="P60056"/>
<dbReference type="KEGG" id="vvy:VVA0877"/>
<dbReference type="PATRIC" id="fig|196600.6.peg.4055"/>
<dbReference type="HOGENOM" id="CLU_063050_0_1_6"/>
<dbReference type="Proteomes" id="UP000002675">
    <property type="component" value="Chromosome II"/>
</dbReference>
<dbReference type="GO" id="GO:0043590">
    <property type="term" value="C:bacterial nucleoid"/>
    <property type="evidence" value="ECO:0007669"/>
    <property type="project" value="TreeGrafter"/>
</dbReference>
<dbReference type="GO" id="GO:0005737">
    <property type="term" value="C:cytoplasm"/>
    <property type="evidence" value="ECO:0007669"/>
    <property type="project" value="UniProtKB-UniRule"/>
</dbReference>
<dbReference type="GO" id="GO:0003690">
    <property type="term" value="F:double-stranded DNA binding"/>
    <property type="evidence" value="ECO:0007669"/>
    <property type="project" value="TreeGrafter"/>
</dbReference>
<dbReference type="GO" id="GO:0003727">
    <property type="term" value="F:single-stranded RNA binding"/>
    <property type="evidence" value="ECO:0007669"/>
    <property type="project" value="TreeGrafter"/>
</dbReference>
<dbReference type="HAMAP" id="MF_00730">
    <property type="entry name" value="NdpA"/>
    <property type="match status" value="1"/>
</dbReference>
<dbReference type="InterPro" id="IPR007358">
    <property type="entry name" value="Nucleoid_associated_NdpA"/>
</dbReference>
<dbReference type="NCBIfam" id="NF001557">
    <property type="entry name" value="PRK00378.1"/>
    <property type="match status" value="1"/>
</dbReference>
<dbReference type="PANTHER" id="PTHR38772">
    <property type="match status" value="1"/>
</dbReference>
<dbReference type="PANTHER" id="PTHR38772:SF1">
    <property type="entry name" value="NUCLEOID-ASSOCIATED PROTEIN YEJK"/>
    <property type="match status" value="1"/>
</dbReference>
<dbReference type="Pfam" id="PF04245">
    <property type="entry name" value="NA37"/>
    <property type="match status" value="1"/>
</dbReference>
<protein>
    <recommendedName>
        <fullName>Nucleoid-associated protein VVA0877</fullName>
    </recommendedName>
</protein>
<comment type="subcellular location">
    <subcellularLocation>
        <location evidence="1">Cytoplasm</location>
        <location evidence="1">Nucleoid</location>
    </subcellularLocation>
</comment>
<comment type="similarity">
    <text evidence="2">Belongs to the YejK family.</text>
</comment>
<reference key="1">
    <citation type="journal article" date="2003" name="Genome Res.">
        <title>Comparative genome analysis of Vibrio vulnificus, a marine pathogen.</title>
        <authorList>
            <person name="Chen C.-Y."/>
            <person name="Wu K.-M."/>
            <person name="Chang Y.-C."/>
            <person name="Chang C.-H."/>
            <person name="Tsai H.-C."/>
            <person name="Liao T.-L."/>
            <person name="Liu Y.-M."/>
            <person name="Chen H.-J."/>
            <person name="Shen A.B.-T."/>
            <person name="Li J.-C."/>
            <person name="Su T.-L."/>
            <person name="Shao C.-P."/>
            <person name="Lee C.-T."/>
            <person name="Hor L.-I."/>
            <person name="Tsai S.-F."/>
        </authorList>
    </citation>
    <scope>NUCLEOTIDE SEQUENCE [LARGE SCALE GENOMIC DNA]</scope>
    <source>
        <strain>YJ016</strain>
    </source>
</reference>
<sequence>MSMHINNVITHLLYKNESEELQLGLRSEPIDSKSPNGEALVVALHRFYGDKPKGFAEFNYQSDFQEQLEKFRLKEINFYEFSSWTVTRLKDELSKYPFADTGVLALVEYSHLATEYLIIALLPIENSIRLDDGLDINITDHVEFSKITIAARINITDFETKANDKYITYIKGRVGRAVSDFFLDCLSACVTLNTKQQNTVLLQAVEDFCSDSKLERDEKESCKKRIFEYCRDQKKNGEDVQLQELSHELPRNNEGHTFFDYTQEQGYELQESFPVDTATVRKLTKYVGAGGGINISFDSILLGERIFYDVETDTLTLKGIPPNLRYQLQSRR</sequence>
<gene>
    <name type="ordered locus">VVA0877</name>
</gene>
<organism>
    <name type="scientific">Vibrio vulnificus (strain YJ016)</name>
    <dbReference type="NCBI Taxonomy" id="196600"/>
    <lineage>
        <taxon>Bacteria</taxon>
        <taxon>Pseudomonadati</taxon>
        <taxon>Pseudomonadota</taxon>
        <taxon>Gammaproteobacteria</taxon>
        <taxon>Vibrionales</taxon>
        <taxon>Vibrionaceae</taxon>
        <taxon>Vibrio</taxon>
    </lineage>
</organism>
<name>NDPA2_VIBVY</name>
<evidence type="ECO:0000250" key="1"/>
<evidence type="ECO:0000305" key="2"/>
<feature type="chain" id="PRO_0000210925" description="Nucleoid-associated protein VVA0877">
    <location>
        <begin position="1"/>
        <end position="332"/>
    </location>
</feature>
<proteinExistence type="inferred from homology"/>
<accession>P60056</accession>
<keyword id="KW-0963">Cytoplasm</keyword>